<keyword id="KW-1185">Reference proteome</keyword>
<feature type="chain" id="PRO_0000274669" description="Kidney-associated antigen 1">
    <location>
        <begin position="1"/>
        <end position="84"/>
    </location>
</feature>
<feature type="region of interest" description="Disordered" evidence="1">
    <location>
        <begin position="31"/>
        <end position="84"/>
    </location>
</feature>
<feature type="compositionally biased region" description="Polar residues" evidence="1">
    <location>
        <begin position="75"/>
        <end position="84"/>
    </location>
</feature>
<gene>
    <name type="primary">KAAG1</name>
    <name type="synonym">RU2AS</name>
</gene>
<accession>Q9UBP8</accession>
<protein>
    <recommendedName>
        <fullName>Kidney-associated antigen 1</fullName>
    </recommendedName>
    <alternativeName>
        <fullName>RU2 antisense gene protein</fullName>
    </alternativeName>
</protein>
<dbReference type="EMBL" id="AF181720">
    <property type="protein sequence ID" value="AAF23611.1"/>
    <property type="molecule type" value="Genomic_DNA"/>
</dbReference>
<dbReference type="EMBL" id="AF181722">
    <property type="protein sequence ID" value="AAF23613.1"/>
    <property type="molecule type" value="mRNA"/>
</dbReference>
<dbReference type="EMBL" id="AL359713">
    <property type="status" value="NOT_ANNOTATED_CDS"/>
    <property type="molecule type" value="Genomic_DNA"/>
</dbReference>
<dbReference type="RefSeq" id="NP_851854.1">
    <property type="nucleotide sequence ID" value="NM_181337.3"/>
</dbReference>
<dbReference type="BioGRID" id="131666">
    <property type="interactions" value="8"/>
</dbReference>
<dbReference type="IntAct" id="Q9UBP8">
    <property type="interactions" value="4"/>
</dbReference>
<dbReference type="STRING" id="9606.ENSP00000274766"/>
<dbReference type="BioMuta" id="KAAG1"/>
<dbReference type="MassIVE" id="Q9UBP8"/>
<dbReference type="PaxDb" id="9606-ENSP00000274766"/>
<dbReference type="Antibodypedia" id="25266">
    <property type="antibodies" value="10 antibodies from 9 providers"/>
</dbReference>
<dbReference type="DNASU" id="353219"/>
<dbReference type="UCSC" id="uc003ndz.1">
    <property type="organism name" value="human"/>
</dbReference>
<dbReference type="AGR" id="HGNC:21031"/>
<dbReference type="DisGeNET" id="353219"/>
<dbReference type="GeneCards" id="KAAG1"/>
<dbReference type="HGNC" id="HGNC:21031">
    <property type="gene designation" value="KAAG1"/>
</dbReference>
<dbReference type="MalaCards" id="KAAG1"/>
<dbReference type="MIM" id="608211">
    <property type="type" value="gene"/>
</dbReference>
<dbReference type="neXtProt" id="NX_Q9UBP8"/>
<dbReference type="PharmGKB" id="PA134915618"/>
<dbReference type="VEuPathDB" id="HostDB:ENSG00000146049"/>
<dbReference type="eggNOG" id="ENOG502TDZF">
    <property type="taxonomic scope" value="Eukaryota"/>
</dbReference>
<dbReference type="HOGENOM" id="CLU_2573189_0_0_1"/>
<dbReference type="InParanoid" id="Q9UBP8"/>
<dbReference type="OMA" id="APCEEGV"/>
<dbReference type="OrthoDB" id="9534599at2759"/>
<dbReference type="PAN-GO" id="Q9UBP8">
    <property type="GO annotations" value="0 GO annotations based on evolutionary models"/>
</dbReference>
<dbReference type="PhylomeDB" id="Q9UBP8"/>
<dbReference type="TreeFam" id="TF340885"/>
<dbReference type="PathwayCommons" id="Q9UBP8"/>
<dbReference type="SignaLink" id="Q9UBP8"/>
<dbReference type="BioGRID-ORCS" id="353219">
    <property type="hits" value="15 hits in 1038 CRISPR screens"/>
</dbReference>
<dbReference type="GenomeRNAi" id="353219"/>
<dbReference type="Pharos" id="Q9UBP8">
    <property type="development level" value="Tdark"/>
</dbReference>
<dbReference type="PRO" id="PR:Q9UBP8"/>
<dbReference type="Proteomes" id="UP000005640">
    <property type="component" value="Chromosome 6"/>
</dbReference>
<dbReference type="RNAct" id="Q9UBP8">
    <property type="molecule type" value="protein"/>
</dbReference>
<dbReference type="Bgee" id="ENSG00000146049">
    <property type="expression patterns" value="Expressed in male germ line stem cell (sensu Vertebrata) in testis and 26 other cell types or tissues"/>
</dbReference>
<dbReference type="GO" id="GO:0006955">
    <property type="term" value="P:immune response"/>
    <property type="evidence" value="ECO:0000303"/>
    <property type="project" value="UniProtKB"/>
</dbReference>
<dbReference type="InterPro" id="IPR029407">
    <property type="entry name" value="KAAG1"/>
</dbReference>
<dbReference type="Pfam" id="PF15354">
    <property type="entry name" value="KAAG1"/>
    <property type="match status" value="1"/>
</dbReference>
<name>KAAG1_HUMAN</name>
<reference key="1">
    <citation type="journal article" date="1999" name="J. Exp. Med.">
        <title>A new antigen recognized by cytolytic T lymphocytes on a human kidney tumor results from reverse strand transcription.</title>
        <authorList>
            <person name="Van den Eynde B.J."/>
            <person name="Gaugler B."/>
            <person name="Probst-Kepper M."/>
            <person name="Michaux L."/>
            <person name="Devuyst O."/>
            <person name="Lorge F."/>
            <person name="Weynants P."/>
            <person name="Boon T."/>
        </authorList>
    </citation>
    <scope>NUCLEOTIDE SEQUENCE [GENOMIC DNA / MRNA]</scope>
    <scope>TISSUE SPECIFICITY</scope>
</reference>
<reference key="2">
    <citation type="journal article" date="2003" name="Nature">
        <title>The DNA sequence and analysis of human chromosome 6.</title>
        <authorList>
            <person name="Mungall A.J."/>
            <person name="Palmer S.A."/>
            <person name="Sims S.K."/>
            <person name="Edwards C.A."/>
            <person name="Ashurst J.L."/>
            <person name="Wilming L."/>
            <person name="Jones M.C."/>
            <person name="Horton R."/>
            <person name="Hunt S.E."/>
            <person name="Scott C.E."/>
            <person name="Gilbert J.G.R."/>
            <person name="Clamp M.E."/>
            <person name="Bethel G."/>
            <person name="Milne S."/>
            <person name="Ainscough R."/>
            <person name="Almeida J.P."/>
            <person name="Ambrose K.D."/>
            <person name="Andrews T.D."/>
            <person name="Ashwell R.I.S."/>
            <person name="Babbage A.K."/>
            <person name="Bagguley C.L."/>
            <person name="Bailey J."/>
            <person name="Banerjee R."/>
            <person name="Barker D.J."/>
            <person name="Barlow K.F."/>
            <person name="Bates K."/>
            <person name="Beare D.M."/>
            <person name="Beasley H."/>
            <person name="Beasley O."/>
            <person name="Bird C.P."/>
            <person name="Blakey S.E."/>
            <person name="Bray-Allen S."/>
            <person name="Brook J."/>
            <person name="Brown A.J."/>
            <person name="Brown J.Y."/>
            <person name="Burford D.C."/>
            <person name="Burrill W."/>
            <person name="Burton J."/>
            <person name="Carder C."/>
            <person name="Carter N.P."/>
            <person name="Chapman J.C."/>
            <person name="Clark S.Y."/>
            <person name="Clark G."/>
            <person name="Clee C.M."/>
            <person name="Clegg S."/>
            <person name="Cobley V."/>
            <person name="Collier R.E."/>
            <person name="Collins J.E."/>
            <person name="Colman L.K."/>
            <person name="Corby N.R."/>
            <person name="Coville G.J."/>
            <person name="Culley K.M."/>
            <person name="Dhami P."/>
            <person name="Davies J."/>
            <person name="Dunn M."/>
            <person name="Earthrowl M.E."/>
            <person name="Ellington A.E."/>
            <person name="Evans K.A."/>
            <person name="Faulkner L."/>
            <person name="Francis M.D."/>
            <person name="Frankish A."/>
            <person name="Frankland J."/>
            <person name="French L."/>
            <person name="Garner P."/>
            <person name="Garnett J."/>
            <person name="Ghori M.J."/>
            <person name="Gilby L.M."/>
            <person name="Gillson C.J."/>
            <person name="Glithero R.J."/>
            <person name="Grafham D.V."/>
            <person name="Grant M."/>
            <person name="Gribble S."/>
            <person name="Griffiths C."/>
            <person name="Griffiths M.N.D."/>
            <person name="Hall R."/>
            <person name="Halls K.S."/>
            <person name="Hammond S."/>
            <person name="Harley J.L."/>
            <person name="Hart E.A."/>
            <person name="Heath P.D."/>
            <person name="Heathcott R."/>
            <person name="Holmes S.J."/>
            <person name="Howden P.J."/>
            <person name="Howe K.L."/>
            <person name="Howell G.R."/>
            <person name="Huckle E."/>
            <person name="Humphray S.J."/>
            <person name="Humphries M.D."/>
            <person name="Hunt A.R."/>
            <person name="Johnson C.M."/>
            <person name="Joy A.A."/>
            <person name="Kay M."/>
            <person name="Keenan S.J."/>
            <person name="Kimberley A.M."/>
            <person name="King A."/>
            <person name="Laird G.K."/>
            <person name="Langford C."/>
            <person name="Lawlor S."/>
            <person name="Leongamornlert D.A."/>
            <person name="Leversha M."/>
            <person name="Lloyd C.R."/>
            <person name="Lloyd D.M."/>
            <person name="Loveland J.E."/>
            <person name="Lovell J."/>
            <person name="Martin S."/>
            <person name="Mashreghi-Mohammadi M."/>
            <person name="Maslen G.L."/>
            <person name="Matthews L."/>
            <person name="McCann O.T."/>
            <person name="McLaren S.J."/>
            <person name="McLay K."/>
            <person name="McMurray A."/>
            <person name="Moore M.J.F."/>
            <person name="Mullikin J.C."/>
            <person name="Niblett D."/>
            <person name="Nickerson T."/>
            <person name="Novik K.L."/>
            <person name="Oliver K."/>
            <person name="Overton-Larty E.K."/>
            <person name="Parker A."/>
            <person name="Patel R."/>
            <person name="Pearce A.V."/>
            <person name="Peck A.I."/>
            <person name="Phillimore B.J.C.T."/>
            <person name="Phillips S."/>
            <person name="Plumb R.W."/>
            <person name="Porter K.M."/>
            <person name="Ramsey Y."/>
            <person name="Ranby S.A."/>
            <person name="Rice C.M."/>
            <person name="Ross M.T."/>
            <person name="Searle S.M."/>
            <person name="Sehra H.K."/>
            <person name="Sheridan E."/>
            <person name="Skuce C.D."/>
            <person name="Smith S."/>
            <person name="Smith M."/>
            <person name="Spraggon L."/>
            <person name="Squares S.L."/>
            <person name="Steward C.A."/>
            <person name="Sycamore N."/>
            <person name="Tamlyn-Hall G."/>
            <person name="Tester J."/>
            <person name="Theaker A.J."/>
            <person name="Thomas D.W."/>
            <person name="Thorpe A."/>
            <person name="Tracey A."/>
            <person name="Tromans A."/>
            <person name="Tubby B."/>
            <person name="Wall M."/>
            <person name="Wallis J.M."/>
            <person name="West A.P."/>
            <person name="White S.S."/>
            <person name="Whitehead S.L."/>
            <person name="Whittaker H."/>
            <person name="Wild A."/>
            <person name="Willey D.J."/>
            <person name="Wilmer T.E."/>
            <person name="Wood J.M."/>
            <person name="Wray P.W."/>
            <person name="Wyatt J.C."/>
            <person name="Young L."/>
            <person name="Younger R.M."/>
            <person name="Bentley D.R."/>
            <person name="Coulson A."/>
            <person name="Durbin R.M."/>
            <person name="Hubbard T."/>
            <person name="Sulston J.E."/>
            <person name="Dunham I."/>
            <person name="Rogers J."/>
            <person name="Beck S."/>
        </authorList>
    </citation>
    <scope>NUCLEOTIDE SEQUENCE [LARGE SCALE GENOMIC DNA]</scope>
</reference>
<sequence>MDDDAAPRVEGVPVAVHKHALHDGLRQVAGPGAAAAHLPRWPPPQLAASRREAPPLSQRPHRTQGAGSPPETNEKLTNPQVKEK</sequence>
<proteinExistence type="evidence at transcript level"/>
<comment type="tissue specificity">
    <text evidence="2">Expressed in testis and kidney, and, at lower levels, in urinary bladder and liver. Expressed by a high proportion of tumors of various histologic origin, including melanomas, sarcomas and colorectal carcinomas.</text>
</comment>
<organism>
    <name type="scientific">Homo sapiens</name>
    <name type="common">Human</name>
    <dbReference type="NCBI Taxonomy" id="9606"/>
    <lineage>
        <taxon>Eukaryota</taxon>
        <taxon>Metazoa</taxon>
        <taxon>Chordata</taxon>
        <taxon>Craniata</taxon>
        <taxon>Vertebrata</taxon>
        <taxon>Euteleostomi</taxon>
        <taxon>Mammalia</taxon>
        <taxon>Eutheria</taxon>
        <taxon>Euarchontoglires</taxon>
        <taxon>Primates</taxon>
        <taxon>Haplorrhini</taxon>
        <taxon>Catarrhini</taxon>
        <taxon>Hominidae</taxon>
        <taxon>Homo</taxon>
    </lineage>
</organism>
<evidence type="ECO:0000256" key="1">
    <source>
        <dbReference type="SAM" id="MobiDB-lite"/>
    </source>
</evidence>
<evidence type="ECO:0000269" key="2">
    <source>
    </source>
</evidence>